<dbReference type="EC" id="2.3.3.16"/>
<dbReference type="EMBL" id="AE000513">
    <property type="protein sequence ID" value="AAF10336.1"/>
    <property type="status" value="ALT_INIT"/>
    <property type="molecule type" value="Genomic_DNA"/>
</dbReference>
<dbReference type="PIR" id="A75479">
    <property type="entry name" value="A75479"/>
</dbReference>
<dbReference type="RefSeq" id="NP_294481.1">
    <property type="nucleotide sequence ID" value="NC_001263.1"/>
</dbReference>
<dbReference type="RefSeq" id="WP_027479989.1">
    <property type="nucleotide sequence ID" value="NC_001263.1"/>
</dbReference>
<dbReference type="SMR" id="Q9RWB2"/>
<dbReference type="FunCoup" id="Q9RWB2">
    <property type="interactions" value="360"/>
</dbReference>
<dbReference type="STRING" id="243230.DR_0757"/>
<dbReference type="PaxDb" id="243230-DR_0757"/>
<dbReference type="EnsemblBacteria" id="AAF10336">
    <property type="protein sequence ID" value="AAF10336"/>
    <property type="gene ID" value="DR_0757"/>
</dbReference>
<dbReference type="GeneID" id="69517002"/>
<dbReference type="KEGG" id="dra:DR_0757"/>
<dbReference type="PATRIC" id="fig|243230.17.peg.937"/>
<dbReference type="eggNOG" id="COG0372">
    <property type="taxonomic scope" value="Bacteria"/>
</dbReference>
<dbReference type="HOGENOM" id="CLU_025068_2_1_0"/>
<dbReference type="InParanoid" id="Q9RWB2"/>
<dbReference type="OrthoDB" id="9800864at2"/>
<dbReference type="UniPathway" id="UPA00223">
    <property type="reaction ID" value="UER00717"/>
</dbReference>
<dbReference type="Proteomes" id="UP000002524">
    <property type="component" value="Chromosome 1"/>
</dbReference>
<dbReference type="GO" id="GO:0005737">
    <property type="term" value="C:cytoplasm"/>
    <property type="evidence" value="ECO:0007669"/>
    <property type="project" value="InterPro"/>
</dbReference>
<dbReference type="GO" id="GO:0004108">
    <property type="term" value="F:citrate (Si)-synthase activity"/>
    <property type="evidence" value="ECO:0000318"/>
    <property type="project" value="GO_Central"/>
</dbReference>
<dbReference type="GO" id="GO:0005975">
    <property type="term" value="P:carbohydrate metabolic process"/>
    <property type="evidence" value="ECO:0000318"/>
    <property type="project" value="GO_Central"/>
</dbReference>
<dbReference type="GO" id="GO:0006099">
    <property type="term" value="P:tricarboxylic acid cycle"/>
    <property type="evidence" value="ECO:0000318"/>
    <property type="project" value="GO_Central"/>
</dbReference>
<dbReference type="CDD" id="cd06118">
    <property type="entry name" value="citrate_synt_like_1"/>
    <property type="match status" value="1"/>
</dbReference>
<dbReference type="Gene3D" id="1.10.580.10">
    <property type="entry name" value="Citrate Synthase, domain 1"/>
    <property type="match status" value="1"/>
</dbReference>
<dbReference type="Gene3D" id="1.10.230.10">
    <property type="entry name" value="Cytochrome P450-Terp, domain 2"/>
    <property type="match status" value="1"/>
</dbReference>
<dbReference type="InterPro" id="IPR011278">
    <property type="entry name" value="2-MeCitrate/Citrate_synth_II"/>
</dbReference>
<dbReference type="InterPro" id="IPR016142">
    <property type="entry name" value="Citrate_synth-like_lrg_a-sub"/>
</dbReference>
<dbReference type="InterPro" id="IPR016143">
    <property type="entry name" value="Citrate_synth-like_sm_a-sub"/>
</dbReference>
<dbReference type="InterPro" id="IPR002020">
    <property type="entry name" value="Citrate_synthase"/>
</dbReference>
<dbReference type="InterPro" id="IPR019810">
    <property type="entry name" value="Citrate_synthase_AS"/>
</dbReference>
<dbReference type="InterPro" id="IPR024176">
    <property type="entry name" value="Citrate_synthase_bac-typ"/>
</dbReference>
<dbReference type="InterPro" id="IPR036969">
    <property type="entry name" value="Citrate_synthase_sf"/>
</dbReference>
<dbReference type="NCBIfam" id="TIGR01800">
    <property type="entry name" value="cit_synth_II"/>
    <property type="match status" value="1"/>
</dbReference>
<dbReference type="PANTHER" id="PTHR11739">
    <property type="entry name" value="CITRATE SYNTHASE"/>
    <property type="match status" value="1"/>
</dbReference>
<dbReference type="PANTHER" id="PTHR11739:SF4">
    <property type="entry name" value="CITRATE SYNTHASE, PEROXISOMAL"/>
    <property type="match status" value="1"/>
</dbReference>
<dbReference type="Pfam" id="PF00285">
    <property type="entry name" value="Citrate_synt"/>
    <property type="match status" value="1"/>
</dbReference>
<dbReference type="PIRSF" id="PIRSF001369">
    <property type="entry name" value="Citrate_synth"/>
    <property type="match status" value="1"/>
</dbReference>
<dbReference type="PRINTS" id="PR00143">
    <property type="entry name" value="CITRTSNTHASE"/>
</dbReference>
<dbReference type="SUPFAM" id="SSF48256">
    <property type="entry name" value="Citrate synthase"/>
    <property type="match status" value="1"/>
</dbReference>
<dbReference type="PROSITE" id="PS00480">
    <property type="entry name" value="CITRATE_SYNTHASE"/>
    <property type="match status" value="1"/>
</dbReference>
<accession>Q9RWB2</accession>
<reference key="1">
    <citation type="journal article" date="1999" name="Science">
        <title>Genome sequence of the radioresistant bacterium Deinococcus radiodurans R1.</title>
        <authorList>
            <person name="White O."/>
            <person name="Eisen J.A."/>
            <person name="Heidelberg J.F."/>
            <person name="Hickey E.K."/>
            <person name="Peterson J.D."/>
            <person name="Dodson R.J."/>
            <person name="Haft D.H."/>
            <person name="Gwinn M.L."/>
            <person name="Nelson W.C."/>
            <person name="Richardson D.L."/>
            <person name="Moffat K.S."/>
            <person name="Qin H."/>
            <person name="Jiang L."/>
            <person name="Pamphile W."/>
            <person name="Crosby M."/>
            <person name="Shen M."/>
            <person name="Vamathevan J.J."/>
            <person name="Lam P."/>
            <person name="McDonald L.A."/>
            <person name="Utterback T.R."/>
            <person name="Zalewski C."/>
            <person name="Makarova K.S."/>
            <person name="Aravind L."/>
            <person name="Daly M.J."/>
            <person name="Minton K.W."/>
            <person name="Fleischmann R.D."/>
            <person name="Ketchum K.A."/>
            <person name="Nelson K.E."/>
            <person name="Salzberg S.L."/>
            <person name="Smith H.O."/>
            <person name="Venter J.C."/>
            <person name="Fraser C.M."/>
        </authorList>
    </citation>
    <scope>NUCLEOTIDE SEQUENCE [LARGE SCALE GENOMIC DNA]</scope>
    <source>
        <strain>ATCC 13939 / DSM 20539 / JCM 16871 / CCUG 27074 / LMG 4051 / NBRC 15346 / NCIMB 9279 / VKM B-1422 / R1</strain>
    </source>
</reference>
<reference key="2">
    <citation type="journal article" date="2004" name="Biochem. Biophys. Res. Commun.">
        <title>Protein recycling is a major component of post-irradiation recovery in Deinococcus radiodurans strain R1.</title>
        <authorList>
            <person name="Joshi B.S."/>
            <person name="Schmid R."/>
            <person name="Altendorf K."/>
            <person name="Apte S.K."/>
        </authorList>
    </citation>
    <scope>PROTEIN SEQUENCE OF 2-14</scope>
    <source>
        <strain>ATCC 13939 / DSM 20539 / JCM 16871 / CCUG 27074 / LMG 4051 / NBRC 15346 / NCIMB 9279 / VKM B-1422 / R1</strain>
    </source>
</reference>
<gene>
    <name type="primary">gltA</name>
    <name type="ordered locus">DR_0757</name>
</gene>
<feature type="initiator methionine" description="Removed" evidence="5">
    <location>
        <position position="1"/>
    </location>
</feature>
<feature type="chain" id="PRO_0000169942" description="Citrate synthase">
    <location>
        <begin position="2"/>
        <end position="377"/>
    </location>
</feature>
<feature type="active site" evidence="3">
    <location>
        <position position="220"/>
    </location>
</feature>
<feature type="active site" evidence="3">
    <location>
        <position position="259"/>
    </location>
</feature>
<feature type="active site" evidence="3">
    <location>
        <position position="313"/>
    </location>
</feature>
<comment type="function">
    <text evidence="1">Might regulate the synthesis and function of enzymes involved in later enzymatic steps of Krebs cycle. Loss in activity results in sporulation defect (By similarity).</text>
</comment>
<comment type="catalytic activity">
    <reaction evidence="1 3 4">
        <text>oxaloacetate + acetyl-CoA + H2O = citrate + CoA + H(+)</text>
        <dbReference type="Rhea" id="RHEA:16845"/>
        <dbReference type="ChEBI" id="CHEBI:15377"/>
        <dbReference type="ChEBI" id="CHEBI:15378"/>
        <dbReference type="ChEBI" id="CHEBI:16452"/>
        <dbReference type="ChEBI" id="CHEBI:16947"/>
        <dbReference type="ChEBI" id="CHEBI:57287"/>
        <dbReference type="ChEBI" id="CHEBI:57288"/>
        <dbReference type="EC" id="2.3.3.16"/>
    </reaction>
</comment>
<comment type="pathway">
    <text>Carbohydrate metabolism; tricarboxylic acid cycle; isocitrate from oxaloacetate: step 1/2.</text>
</comment>
<comment type="subunit">
    <text evidence="2">Homodimer.</text>
</comment>
<comment type="miscellaneous">
    <text evidence="1">Citrate synthase is found in nearly all cells capable of oxidative metabolism.</text>
</comment>
<comment type="similarity">
    <text evidence="4 6">Belongs to the citrate synthase family.</text>
</comment>
<comment type="sequence caution" evidence="6">
    <conflict type="erroneous initiation">
        <sequence resource="EMBL-CDS" id="AAF10336"/>
    </conflict>
</comment>
<sequence>MSNIAKGLEGVLFTESKLTFINGSEGILTHLGIPIQEWAEKSTFEELSLALLDAKLPTAEELAKFDAELKANRAIPDQLVGIIRDMPKGVHPMQALRTAVSYLGLLDPQAEDITPEARRAISTRMIAQFSTIIAAINRAQEGQDIVAPRADLTHAGNFLYMLTGNEPTPEQARLFDIALVLHADHGMNASTFTAIATSSTLSDMYSCMVSAIGALKGPLHGGANEAVMTMLDEIGTVDKAEAYITGKLDNKEKIMGVGHRVYKYFDPRSRVLRDYAEHVANKEGKSNYYQILEAIEKIIVDRMGAKGIYPNVDFYSGTVYSDLGIKKEYFTPIFALARISGWCASVIEYSQDNRLLRPDAEYTGARDQHYVDIKDRQ</sequence>
<protein>
    <recommendedName>
        <fullName>Citrate synthase</fullName>
        <ecNumber>2.3.3.16</ecNumber>
    </recommendedName>
</protein>
<proteinExistence type="evidence at protein level"/>
<organism>
    <name type="scientific">Deinococcus radiodurans (strain ATCC 13939 / DSM 20539 / JCM 16871 / CCUG 27074 / LMG 4051 / NBRC 15346 / NCIMB 9279 / VKM B-1422 / R1)</name>
    <dbReference type="NCBI Taxonomy" id="243230"/>
    <lineage>
        <taxon>Bacteria</taxon>
        <taxon>Thermotogati</taxon>
        <taxon>Deinococcota</taxon>
        <taxon>Deinococci</taxon>
        <taxon>Deinococcales</taxon>
        <taxon>Deinococcaceae</taxon>
        <taxon>Deinococcus</taxon>
    </lineage>
</organism>
<name>CISY_DEIRA</name>
<keyword id="KW-0021">Allosteric enzyme</keyword>
<keyword id="KW-0903">Direct protein sequencing</keyword>
<keyword id="KW-1185">Reference proteome</keyword>
<keyword id="KW-0808">Transferase</keyword>
<keyword id="KW-0816">Tricarboxylic acid cycle</keyword>
<evidence type="ECO:0000250" key="1">
    <source>
        <dbReference type="UniProtKB" id="P39120"/>
    </source>
</evidence>
<evidence type="ECO:0000250" key="2">
    <source>
        <dbReference type="UniProtKB" id="Q53554"/>
    </source>
</evidence>
<evidence type="ECO:0000255" key="3">
    <source>
        <dbReference type="PROSITE-ProRule" id="PRU10117"/>
    </source>
</evidence>
<evidence type="ECO:0000255" key="4">
    <source>
        <dbReference type="RuleBase" id="RU000441"/>
    </source>
</evidence>
<evidence type="ECO:0000269" key="5">
    <source>
    </source>
</evidence>
<evidence type="ECO:0000305" key="6"/>